<feature type="chain" id="PRO_0000038128" description="Large delta antigen">
    <location>
        <begin position="1"/>
        <end position="211"/>
    </location>
</feature>
<feature type="propeptide" id="PRO_0000396786" description="Removed in mature form">
    <location>
        <begin position="212"/>
        <end position="214"/>
    </location>
</feature>
<feature type="domain" description="HDAg" evidence="5">
    <location>
        <begin position="20"/>
        <end position="195"/>
    </location>
</feature>
<feature type="region of interest" description="Dimerization" evidence="4">
    <location>
        <begin position="12"/>
        <end position="60"/>
    </location>
</feature>
<feature type="region of interest" description="Disordered" evidence="6">
    <location>
        <begin position="52"/>
        <end position="214"/>
    </location>
</feature>
<feature type="region of interest" description="RNA-binding" evidence="5">
    <location>
        <begin position="97"/>
        <end position="107"/>
    </location>
</feature>
<feature type="region of interest" description="RNAPII-binding" evidence="5">
    <location>
        <begin position="130"/>
        <end position="195"/>
    </location>
</feature>
<feature type="region of interest" description="RNA-binding" evidence="5">
    <location>
        <begin position="136"/>
        <end position="146"/>
    </location>
</feature>
<feature type="short sequence motif" description="Nuclear localization signal" evidence="3">
    <location>
        <begin position="66"/>
        <end position="75"/>
    </location>
</feature>
<feature type="compositionally biased region" description="Basic and acidic residues" evidence="6">
    <location>
        <begin position="94"/>
        <end position="112"/>
    </location>
</feature>
<feature type="compositionally biased region" description="Basic and acidic residues" evidence="6">
    <location>
        <begin position="129"/>
        <end position="144"/>
    </location>
</feature>
<feature type="compositionally biased region" description="Gly residues" evidence="6">
    <location>
        <begin position="158"/>
        <end position="167"/>
    </location>
</feature>
<feature type="modified residue" description="Phosphoserine; by host" evidence="3">
    <location>
        <position position="2"/>
    </location>
</feature>
<feature type="modified residue" description="Omega-N-methylated arginine; by host" evidence="2">
    <location>
        <position position="13"/>
    </location>
</feature>
<feature type="modified residue" description="N6-acetyllysine; by host" evidence="2">
    <location>
        <position position="72"/>
    </location>
</feature>
<feature type="modified residue" description="Phosphoserine; by host" evidence="3">
    <location>
        <position position="123"/>
    </location>
</feature>
<feature type="modified residue" description="Phosphoserine; by host" evidence="3">
    <location>
        <position position="177"/>
    </location>
</feature>
<feature type="modified residue" description="Cysteine methyl ester; by host" evidence="7">
    <location>
        <position position="211"/>
    </location>
</feature>
<feature type="lipid moiety-binding region" description="S-farnesyl cysteine; by host" evidence="3">
    <location>
        <position position="211"/>
    </location>
</feature>
<dbReference type="EMBL" id="M28267">
    <property type="protein sequence ID" value="AAA98112.1"/>
    <property type="molecule type" value="Genomic_RNA"/>
</dbReference>
<dbReference type="SMR" id="P0C6L5"/>
<dbReference type="Proteomes" id="UP000007708">
    <property type="component" value="Genome"/>
</dbReference>
<dbReference type="GO" id="GO:0043657">
    <property type="term" value="C:host cell"/>
    <property type="evidence" value="ECO:0007669"/>
    <property type="project" value="GOC"/>
</dbReference>
<dbReference type="GO" id="GO:0044196">
    <property type="term" value="C:host cell nucleolus"/>
    <property type="evidence" value="ECO:0007669"/>
    <property type="project" value="UniProtKB-SubCell"/>
</dbReference>
<dbReference type="GO" id="GO:0044423">
    <property type="term" value="C:virion component"/>
    <property type="evidence" value="ECO:0007669"/>
    <property type="project" value="UniProtKB-KW"/>
</dbReference>
<dbReference type="GO" id="GO:0003723">
    <property type="term" value="F:RNA binding"/>
    <property type="evidence" value="ECO:0007669"/>
    <property type="project" value="UniProtKB-KW"/>
</dbReference>
<dbReference type="GO" id="GO:0046718">
    <property type="term" value="P:symbiont entry into host cell"/>
    <property type="evidence" value="ECO:0007669"/>
    <property type="project" value="UniProtKB-KW"/>
</dbReference>
<dbReference type="GO" id="GO:0075732">
    <property type="term" value="P:viral penetration into host nucleus"/>
    <property type="evidence" value="ECO:0007669"/>
    <property type="project" value="UniProtKB-KW"/>
</dbReference>
<dbReference type="Gene3D" id="4.10.220.40">
    <property type="entry name" value="Delta antigen, N-terminal"/>
    <property type="match status" value="1"/>
</dbReference>
<dbReference type="InterPro" id="IPR027403">
    <property type="entry name" value="Delta_antigen_N"/>
</dbReference>
<dbReference type="InterPro" id="IPR037517">
    <property type="entry name" value="HDAG_dom"/>
</dbReference>
<dbReference type="InterPro" id="IPR002506">
    <property type="entry name" value="HDV_ag"/>
</dbReference>
<dbReference type="Pfam" id="PF01517">
    <property type="entry name" value="HDV_ag"/>
    <property type="match status" value="1"/>
</dbReference>
<dbReference type="SUPFAM" id="SSF58108">
    <property type="entry name" value="Oligomerization domain of hepatitis delta antigen"/>
    <property type="match status" value="1"/>
</dbReference>
<dbReference type="PROSITE" id="PS51838">
    <property type="entry name" value="HDAG"/>
    <property type="match status" value="1"/>
</dbReference>
<evidence type="ECO:0000250" key="1"/>
<evidence type="ECO:0000250" key="2">
    <source>
        <dbReference type="UniProtKB" id="P0C6L3"/>
    </source>
</evidence>
<evidence type="ECO:0000250" key="3">
    <source>
        <dbReference type="UniProtKB" id="P29996"/>
    </source>
</evidence>
<evidence type="ECO:0000255" key="4"/>
<evidence type="ECO:0000255" key="5">
    <source>
        <dbReference type="PROSITE-ProRule" id="PRU01183"/>
    </source>
</evidence>
<evidence type="ECO:0000256" key="6">
    <source>
        <dbReference type="SAM" id="MobiDB-lite"/>
    </source>
</evidence>
<evidence type="ECO:0000305" key="7"/>
<reference key="1">
    <citation type="journal article" date="1987" name="Nature">
        <title>Molecular cloning and sequencing of a human hepatitis delta (delta) virus RNA.</title>
        <authorList>
            <person name="Makino S."/>
            <person name="Chang M.F."/>
            <person name="Shieh C.K."/>
            <person name="Kamahora T."/>
            <person name="Vannier D.M."/>
            <person name="Govindarajan S."/>
            <person name="Lai M.M.C."/>
        </authorList>
    </citation>
    <scope>NUCLEOTIDE SEQUENCE [GENOMIC RNA]</scope>
</reference>
<reference key="2">
    <citation type="journal article" date="2005" name="Acta Virol.">
        <title>Hepatitis D.</title>
        <authorList>
            <person name="Husa P."/>
            <person name="Linhartova A."/>
            <person name="Nemecek V."/>
            <person name="Husova L."/>
        </authorList>
    </citation>
    <scope>REVIEW</scope>
</reference>
<reference key="3">
    <citation type="journal article" date="2006" name="Curr. Top. Microbiol. Immunol.">
        <title>Post-translational modification of delta antigen of hepatitis D virus.</title>
        <authorList>
            <person name="Huang W.H."/>
            <person name="Chen C.W."/>
            <person name="Wu H.L."/>
            <person name="Chen P.J."/>
        </authorList>
    </citation>
    <scope>REVIEW</scope>
</reference>
<reference key="4">
    <citation type="journal article" date="1999" name="Proteins">
        <title>Solution structure and RNA-binding activity of the N-terminal leucine-repeat region of hepatitis delta antigen.</title>
        <authorList>
            <person name="Lin I.J."/>
            <person name="Lou Y.C."/>
            <person name="Pai M.T."/>
            <person name="Wu H.N."/>
            <person name="Cheng J.W."/>
        </authorList>
    </citation>
    <scope>STRUCTURE BY NMR OF 24-50</scope>
</reference>
<comment type="function">
    <text evidence="1">Following virus entry into host cell, provides nuclear import of HDV RNPs thanks to its nuclear localization signal. Needs co-infection with hepatitis B virus to provide surface proteins, otherwise there is no packaging or budding. Packages the HDV ribonucleoprotein in hepatitis B virus empty particles. Interacts with both HDV genomic RNA and cytoplasmic tail of HBsAg. May inhibit viral RNA replication (By similarity).</text>
</comment>
<comment type="subunit">
    <text evidence="1">Homodimer. Homooctamer. Interacts with HBV HBsAg. May interact with clathrin to induce virion budding (By similarity).</text>
</comment>
<comment type="subcellular location">
    <subcellularLocation>
        <location>Virion</location>
    </subcellularLocation>
    <subcellularLocation>
        <location>Host nucleus</location>
        <location>Host nucleolus</location>
    </subcellularLocation>
    <text evidence="1">isoprenylated in the cytoplasm, and translocates in the nucleus possibly after phosphorylation. Translocates after to nuclear speckle, then to the ER membrane where interaction with Hepatitis B virus antigene takes place (By similarity).</text>
</comment>
<comment type="PTM">
    <text evidence="1">Prenylated by host farnesyl-transferase in the cytoplasm prior to nucleus translocation.</text>
</comment>
<comment type="PTM">
    <text evidence="1">Phosphorylated at serines by host CK2 and other kinases. phosphorylation does not seem to be important for its function (By similarity).</text>
</comment>
<comment type="RNA editing">
    <location>
        <position position="196" evidence="1"/>
    </location>
    <text evidence="1">Partially edited. RNA editing at this position occurs on the antigenomic strand and consists of a conversion of A to G catalyzed by the cellular enzyme ADAR1. The unedited RNA version gives rise to the small delta antigen (AC P25989), which ends with a nonsense codon at position 196. In the edited version, this amber codon is modified to a tryptophan codon and gives rise to the large delta antigen protein. S-HDAg suppresses editing of non-replicating antigenomic RNA, thereby regulating the extent of editing (By similarity).</text>
</comment>
<comment type="miscellaneous">
    <text>This strain belongs to the genotype I found in North America, Europe, Africa, East and West Asia and the South Pacific.</text>
</comment>
<comment type="similarity">
    <text evidence="7">Belongs to the hepatitis delta antigen family.</text>
</comment>
<organism>
    <name type="scientific">Hepatitis delta virus genotype I (isolate American)</name>
    <name type="common">HDV</name>
    <dbReference type="NCBI Taxonomy" id="10422"/>
    <lineage>
        <taxon>Viruses</taxon>
        <taxon>Ribozyviria</taxon>
        <taxon>Kolmioviridae</taxon>
        <taxon>Deltavirus</taxon>
        <taxon>Hepatitis delta virus</taxon>
    </lineage>
</organism>
<protein>
    <recommendedName>
        <fullName>Large delta antigen</fullName>
        <shortName>L-HDAg</shortName>
    </recommendedName>
    <alternativeName>
        <fullName>p27</fullName>
    </alternativeName>
</protein>
<name>LHDAG_HDVAM</name>
<organismHost>
    <name type="scientific">Homo sapiens</name>
    <name type="common">Human</name>
    <dbReference type="NCBI Taxonomy" id="9606"/>
</organismHost>
<proteinExistence type="evidence at protein level"/>
<accession>P0C6L5</accession>
<keyword id="KW-0007">Acetylation</keyword>
<keyword id="KW-1048">Host nucleus</keyword>
<keyword id="KW-0449">Lipoprotein</keyword>
<keyword id="KW-0488">Methylation</keyword>
<keyword id="KW-0597">Phosphoprotein</keyword>
<keyword id="KW-0636">Prenylation</keyword>
<keyword id="KW-0691">RNA editing</keyword>
<keyword id="KW-0694">RNA-binding</keyword>
<keyword id="KW-1163">Viral penetration into host nucleus</keyword>
<keyword id="KW-0946">Virion</keyword>
<keyword id="KW-1160">Virus entry into host cell</keyword>
<sequence>MSRSERRKDRGGREDILEQWVSGRKKLEELERDLRKLKKKIKKLEEDNPWLGNIKGIIGKKDKDGEGAPPAKKLRMDQMEIDAGPRKRPLRGGFTDKERQDHRRRKALENKRKQLSSGGKSLSREEEEELKRLTEEDEKRERRIAGPSVGGVNPLEGGSRGAPGGGFVPSMQGVPESPFARTGEGLDIRGSQGFPWDILFPADPPFSPQSCRPQ</sequence>